<comment type="function">
    <text evidence="1">Component of the tagatose-1,6-bisphosphate aldolase KbaYZ that is required for full activity and stability of the Y subunit. Could have a chaperone-like function for the proper and stable folding of KbaY. When expressed alone, KbaZ does not show any aldolase activity.</text>
</comment>
<comment type="pathway">
    <text evidence="1">Carbohydrate metabolism; D-tagatose 6-phosphate degradation; D-glyceraldehyde 3-phosphate and glycerone phosphate from D-tagatose 6-phosphate: step 2/2.</text>
</comment>
<comment type="subunit">
    <text evidence="1">Forms a complex with KbaY.</text>
</comment>
<comment type="similarity">
    <text evidence="1">Belongs to the GatZ/KbaZ family. KbaZ subfamily.</text>
</comment>
<comment type="sequence caution" evidence="2">
    <conflict type="erroneous initiation">
        <sequence resource="EMBL-CDS" id="ABX24143"/>
    </conflict>
</comment>
<reference key="1">
    <citation type="submission" date="2007-11" db="EMBL/GenBank/DDBJ databases">
        <authorList>
            <consortium name="The Salmonella enterica serovar Arizonae Genome Sequencing Project"/>
            <person name="McClelland M."/>
            <person name="Sanderson E.K."/>
            <person name="Porwollik S."/>
            <person name="Spieth J."/>
            <person name="Clifton W.S."/>
            <person name="Fulton R."/>
            <person name="Chunyan W."/>
            <person name="Wollam A."/>
            <person name="Shah N."/>
            <person name="Pepin K."/>
            <person name="Bhonagiri V."/>
            <person name="Nash W."/>
            <person name="Johnson M."/>
            <person name="Thiruvilangam P."/>
            <person name="Wilson R."/>
        </authorList>
    </citation>
    <scope>NUCLEOTIDE SEQUENCE [LARGE SCALE GENOMIC DNA]</scope>
    <source>
        <strain>ATCC BAA-731 / CDC346-86 / RSK2980</strain>
    </source>
</reference>
<organism>
    <name type="scientific">Salmonella arizonae (strain ATCC BAA-731 / CDC346-86 / RSK2980)</name>
    <dbReference type="NCBI Taxonomy" id="41514"/>
    <lineage>
        <taxon>Bacteria</taxon>
        <taxon>Pseudomonadati</taxon>
        <taxon>Pseudomonadota</taxon>
        <taxon>Gammaproteobacteria</taxon>
        <taxon>Enterobacterales</taxon>
        <taxon>Enterobacteriaceae</taxon>
        <taxon>Salmonella</taxon>
    </lineage>
</organism>
<accession>A9MPQ0</accession>
<keyword id="KW-1185">Reference proteome</keyword>
<sequence>MKHLTNMVEQHKRGKANGIYAVCSAHPLVLESAIRYAHANHTPLLIEATSNQVDQFGGYTGMTPADFRDFVCQLADSLGFPQSELILGGDHLGPNRWQNLPATQAMANADDLIKSYVAAGFKKIHLDCSMSCADDPVPLTDEIVAERAARLAKVAEETCQQHFGKSDLVYVIGTEVPVPGGAHETLTELEVTTPEAARATLEAHRYAFEKQGLDAIWPRINALVVQPGVEFDHTQIIDYQPQKATELSKMVETYDMLVFEAHSTDYQTPQSLRQLVKDHFAILKVGPALTFALREALFSLAAIEEELLPAKACSGLRHVLESVMLDRPEYWQNHYHGDGNARRLARGYSYSDRVRYYWPDSQIDDAFERLVRNLADEPIPLPLISQYLPLQYVKVREGDLNATPRELIISHIQDILQQYHAACYGTTFYNE</sequence>
<feature type="chain" id="PRO_0000372544" description="D-tagatose-1,6-bisphosphate aldolase subunit KbaZ">
    <location>
        <begin position="1"/>
        <end position="431"/>
    </location>
</feature>
<protein>
    <recommendedName>
        <fullName evidence="1">D-tagatose-1,6-bisphosphate aldolase subunit KbaZ</fullName>
    </recommendedName>
</protein>
<gene>
    <name evidence="1" type="primary">kbaZ</name>
    <name type="ordered locus">SARI_04364</name>
</gene>
<dbReference type="EMBL" id="CP000880">
    <property type="protein sequence ID" value="ABX24143.1"/>
    <property type="status" value="ALT_INIT"/>
    <property type="molecule type" value="Genomic_DNA"/>
</dbReference>
<dbReference type="SMR" id="A9MPQ0"/>
<dbReference type="STRING" id="41514.SARI_04364"/>
<dbReference type="KEGG" id="ses:SARI_04364"/>
<dbReference type="HOGENOM" id="CLU_053334_0_0_6"/>
<dbReference type="UniPathway" id="UPA00704">
    <property type="reaction ID" value="UER00716"/>
</dbReference>
<dbReference type="Proteomes" id="UP000002084">
    <property type="component" value="Chromosome"/>
</dbReference>
<dbReference type="GO" id="GO:0005886">
    <property type="term" value="C:plasma membrane"/>
    <property type="evidence" value="ECO:0007669"/>
    <property type="project" value="TreeGrafter"/>
</dbReference>
<dbReference type="GO" id="GO:0005975">
    <property type="term" value="P:carbohydrate metabolic process"/>
    <property type="evidence" value="ECO:0007669"/>
    <property type="project" value="InterPro"/>
</dbReference>
<dbReference type="GO" id="GO:2001059">
    <property type="term" value="P:D-tagatose 6-phosphate catabolic process"/>
    <property type="evidence" value="ECO:0007669"/>
    <property type="project" value="UniProtKB-UniRule"/>
</dbReference>
<dbReference type="GO" id="GO:0009401">
    <property type="term" value="P:phosphoenolpyruvate-dependent sugar phosphotransferase system"/>
    <property type="evidence" value="ECO:0007669"/>
    <property type="project" value="TreeGrafter"/>
</dbReference>
<dbReference type="FunFam" id="3.20.20.70:FF:000141">
    <property type="entry name" value="D-tagatose-1,6-bisphosphate aldolase subunit GatZ"/>
    <property type="match status" value="1"/>
</dbReference>
<dbReference type="Gene3D" id="3.20.20.70">
    <property type="entry name" value="Aldolase class I"/>
    <property type="match status" value="1"/>
</dbReference>
<dbReference type="Gene3D" id="1.10.400.20">
    <property type="entry name" value="putative tagatose 6-phosphate kinase domain like"/>
    <property type="match status" value="1"/>
</dbReference>
<dbReference type="HAMAP" id="MF_01295">
    <property type="entry name" value="Tagatose_aldol_KbaZ"/>
    <property type="match status" value="1"/>
</dbReference>
<dbReference type="InterPro" id="IPR013785">
    <property type="entry name" value="Aldolase_TIM"/>
</dbReference>
<dbReference type="InterPro" id="IPR012062">
    <property type="entry name" value="GatZ/KbaZ-like"/>
</dbReference>
<dbReference type="InterPro" id="IPR050303">
    <property type="entry name" value="GatZ_KbaZ_carbometab"/>
</dbReference>
<dbReference type="InterPro" id="IPR023435">
    <property type="entry name" value="TagBP_ald_KbaZ"/>
</dbReference>
<dbReference type="NCBIfam" id="TIGR02810">
    <property type="entry name" value="agaZ_gatZ"/>
    <property type="match status" value="1"/>
</dbReference>
<dbReference type="NCBIfam" id="NF012002">
    <property type="entry name" value="PRK15458.1"/>
    <property type="match status" value="1"/>
</dbReference>
<dbReference type="PANTHER" id="PTHR32502:SF2">
    <property type="entry name" value="D-TAGATOSE-1,6-BISPHOSPHATE ALDOLASE SUBUNIT KBAZ"/>
    <property type="match status" value="1"/>
</dbReference>
<dbReference type="PANTHER" id="PTHR32502">
    <property type="entry name" value="N-ACETYLGALACTOSAMINE PERMEASE II COMPONENT-RELATED"/>
    <property type="match status" value="1"/>
</dbReference>
<dbReference type="Pfam" id="PF08013">
    <property type="entry name" value="GatZ_KbaZ-like"/>
    <property type="match status" value="1"/>
</dbReference>
<dbReference type="PIRSF" id="PIRSF009264">
    <property type="entry name" value="TagBP_ald_AgaZ"/>
    <property type="match status" value="1"/>
</dbReference>
<dbReference type="SUPFAM" id="SSF51569">
    <property type="entry name" value="Aldolase"/>
    <property type="match status" value="1"/>
</dbReference>
<evidence type="ECO:0000255" key="1">
    <source>
        <dbReference type="HAMAP-Rule" id="MF_01295"/>
    </source>
</evidence>
<evidence type="ECO:0000305" key="2"/>
<name>KBAZ_SALAR</name>
<proteinExistence type="inferred from homology"/>